<protein>
    <recommendedName>
        <fullName evidence="1">Single-stranded DNA-binding protein</fullName>
        <shortName evidence="1">SSB</shortName>
    </recommendedName>
</protein>
<sequence>MAGSLNKVILIGNVGRDPEIRTTGEGKKIINLSLATTETWKDRITSERKERTEWHRVVIFSEGLVSIVERYVTKGSKLYIEGSLQTRKWNDNSGQEKYTTEVVLQNFNSQLILLDNKNSNNHTQGSGHNEYKYPEIKNHSFDHSDLDDEIPF</sequence>
<reference key="1">
    <citation type="journal article" date="2004" name="J. Bacteriol.">
        <title>Complete genome sequence of Rickettsia typhi and comparison with sequences of other Rickettsiae.</title>
        <authorList>
            <person name="McLeod M.P."/>
            <person name="Qin X."/>
            <person name="Karpathy S.E."/>
            <person name="Gioia J."/>
            <person name="Highlander S.K."/>
            <person name="Fox G.E."/>
            <person name="McNeill T.Z."/>
            <person name="Jiang H."/>
            <person name="Muzny D."/>
            <person name="Jacob L.S."/>
            <person name="Hawes A.C."/>
            <person name="Sodergren E."/>
            <person name="Gill R."/>
            <person name="Hume J."/>
            <person name="Morgan M."/>
            <person name="Fan G."/>
            <person name="Amin A.G."/>
            <person name="Gibbs R.A."/>
            <person name="Hong C."/>
            <person name="Yu X.-J."/>
            <person name="Walker D.H."/>
            <person name="Weinstock G.M."/>
        </authorList>
    </citation>
    <scope>NUCLEOTIDE SEQUENCE [LARGE SCALE GENOMIC DNA]</scope>
    <source>
        <strain>ATCC VR-144 / Wilmington</strain>
    </source>
</reference>
<feature type="chain" id="PRO_0000286493" description="Single-stranded DNA-binding protein">
    <location>
        <begin position="1"/>
        <end position="152"/>
    </location>
</feature>
<feature type="domain" description="SSB" evidence="1">
    <location>
        <begin position="5"/>
        <end position="111"/>
    </location>
</feature>
<feature type="DNA-binding region" evidence="1">
    <location>
        <begin position="54"/>
        <end position="60"/>
    </location>
</feature>
<feature type="region of interest" description="Disordered" evidence="2">
    <location>
        <begin position="117"/>
        <end position="152"/>
    </location>
</feature>
<feature type="short sequence motif" description="Important for interaction with partner proteins" evidence="1">
    <location>
        <begin position="147"/>
        <end position="152"/>
    </location>
</feature>
<feature type="compositionally biased region" description="Polar residues" evidence="2">
    <location>
        <begin position="117"/>
        <end position="127"/>
    </location>
</feature>
<feature type="compositionally biased region" description="Basic and acidic residues" evidence="2">
    <location>
        <begin position="129"/>
        <end position="144"/>
    </location>
</feature>
<comment type="function">
    <text evidence="1">Plays an important role in DNA replication, recombination and repair. Binds to ssDNA and to an array of partner proteins to recruit them to their sites of action during DNA metabolism.</text>
</comment>
<comment type="subunit">
    <text evidence="1">Homotetramer.</text>
</comment>
<name>SSB_RICTY</name>
<organism>
    <name type="scientific">Rickettsia typhi (strain ATCC VR-144 / Wilmington)</name>
    <dbReference type="NCBI Taxonomy" id="257363"/>
    <lineage>
        <taxon>Bacteria</taxon>
        <taxon>Pseudomonadati</taxon>
        <taxon>Pseudomonadota</taxon>
        <taxon>Alphaproteobacteria</taxon>
        <taxon>Rickettsiales</taxon>
        <taxon>Rickettsiaceae</taxon>
        <taxon>Rickettsieae</taxon>
        <taxon>Rickettsia</taxon>
        <taxon>typhus group</taxon>
    </lineage>
</organism>
<dbReference type="EMBL" id="AE017197">
    <property type="protein sequence ID" value="AAU04279.1"/>
    <property type="molecule type" value="Genomic_DNA"/>
</dbReference>
<dbReference type="RefSeq" id="WP_011191253.1">
    <property type="nucleotide sequence ID" value="NC_006142.1"/>
</dbReference>
<dbReference type="SMR" id="Q68Y11"/>
<dbReference type="KEGG" id="rty:RT0824"/>
<dbReference type="eggNOG" id="COG0629">
    <property type="taxonomic scope" value="Bacteria"/>
</dbReference>
<dbReference type="HOGENOM" id="CLU_078758_0_2_5"/>
<dbReference type="OrthoDB" id="9809878at2"/>
<dbReference type="Proteomes" id="UP000000604">
    <property type="component" value="Chromosome"/>
</dbReference>
<dbReference type="GO" id="GO:0009295">
    <property type="term" value="C:nucleoid"/>
    <property type="evidence" value="ECO:0007669"/>
    <property type="project" value="TreeGrafter"/>
</dbReference>
<dbReference type="GO" id="GO:0003697">
    <property type="term" value="F:single-stranded DNA binding"/>
    <property type="evidence" value="ECO:0007669"/>
    <property type="project" value="UniProtKB-UniRule"/>
</dbReference>
<dbReference type="GO" id="GO:0006310">
    <property type="term" value="P:DNA recombination"/>
    <property type="evidence" value="ECO:0007669"/>
    <property type="project" value="UniProtKB-UniRule"/>
</dbReference>
<dbReference type="GO" id="GO:0006281">
    <property type="term" value="P:DNA repair"/>
    <property type="evidence" value="ECO:0007669"/>
    <property type="project" value="UniProtKB-UniRule"/>
</dbReference>
<dbReference type="GO" id="GO:0006260">
    <property type="term" value="P:DNA replication"/>
    <property type="evidence" value="ECO:0007669"/>
    <property type="project" value="UniProtKB-UniRule"/>
</dbReference>
<dbReference type="CDD" id="cd04496">
    <property type="entry name" value="SSB_OBF"/>
    <property type="match status" value="1"/>
</dbReference>
<dbReference type="Gene3D" id="2.40.50.140">
    <property type="entry name" value="Nucleic acid-binding proteins"/>
    <property type="match status" value="1"/>
</dbReference>
<dbReference type="HAMAP" id="MF_00984">
    <property type="entry name" value="SSB"/>
    <property type="match status" value="1"/>
</dbReference>
<dbReference type="InterPro" id="IPR012340">
    <property type="entry name" value="NA-bd_OB-fold"/>
</dbReference>
<dbReference type="InterPro" id="IPR000424">
    <property type="entry name" value="Primosome_PriB/ssb"/>
</dbReference>
<dbReference type="InterPro" id="IPR011344">
    <property type="entry name" value="ssDNA-bd"/>
</dbReference>
<dbReference type="NCBIfam" id="NF005170">
    <property type="entry name" value="PRK06642.1"/>
    <property type="match status" value="1"/>
</dbReference>
<dbReference type="NCBIfam" id="TIGR00621">
    <property type="entry name" value="ssb"/>
    <property type="match status" value="1"/>
</dbReference>
<dbReference type="PANTHER" id="PTHR10302">
    <property type="entry name" value="SINGLE-STRANDED DNA-BINDING PROTEIN"/>
    <property type="match status" value="1"/>
</dbReference>
<dbReference type="PANTHER" id="PTHR10302:SF27">
    <property type="entry name" value="SINGLE-STRANDED DNA-BINDING PROTEIN"/>
    <property type="match status" value="1"/>
</dbReference>
<dbReference type="Pfam" id="PF00436">
    <property type="entry name" value="SSB"/>
    <property type="match status" value="1"/>
</dbReference>
<dbReference type="PIRSF" id="PIRSF002070">
    <property type="entry name" value="SSB"/>
    <property type="match status" value="1"/>
</dbReference>
<dbReference type="SUPFAM" id="SSF50249">
    <property type="entry name" value="Nucleic acid-binding proteins"/>
    <property type="match status" value="1"/>
</dbReference>
<dbReference type="PROSITE" id="PS50935">
    <property type="entry name" value="SSB"/>
    <property type="match status" value="1"/>
</dbReference>
<keyword id="KW-0227">DNA damage</keyword>
<keyword id="KW-0233">DNA recombination</keyword>
<keyword id="KW-0234">DNA repair</keyword>
<keyword id="KW-0235">DNA replication</keyword>
<keyword id="KW-0238">DNA-binding</keyword>
<evidence type="ECO:0000255" key="1">
    <source>
        <dbReference type="HAMAP-Rule" id="MF_00984"/>
    </source>
</evidence>
<evidence type="ECO:0000256" key="2">
    <source>
        <dbReference type="SAM" id="MobiDB-lite"/>
    </source>
</evidence>
<proteinExistence type="inferred from homology"/>
<accession>Q68Y11</accession>
<gene>
    <name type="primary">ssb</name>
    <name type="ordered locus">RT0824</name>
</gene>